<feature type="chain" id="PRO_1000020447" description="Threonine--tRNA ligase">
    <location>
        <begin position="1"/>
        <end position="642"/>
    </location>
</feature>
<feature type="domain" description="TGS" evidence="2">
    <location>
        <begin position="1"/>
        <end position="65"/>
    </location>
</feature>
<feature type="region of interest" description="Catalytic" evidence="1">
    <location>
        <begin position="248"/>
        <end position="541"/>
    </location>
</feature>
<feature type="binding site" evidence="1">
    <location>
        <position position="342"/>
    </location>
    <ligand>
        <name>Zn(2+)</name>
        <dbReference type="ChEBI" id="CHEBI:29105"/>
    </ligand>
</feature>
<feature type="binding site" evidence="1">
    <location>
        <position position="393"/>
    </location>
    <ligand>
        <name>Zn(2+)</name>
        <dbReference type="ChEBI" id="CHEBI:29105"/>
    </ligand>
</feature>
<feature type="binding site" evidence="1">
    <location>
        <position position="518"/>
    </location>
    <ligand>
        <name>Zn(2+)</name>
        <dbReference type="ChEBI" id="CHEBI:29105"/>
    </ligand>
</feature>
<name>SYT_MYXXD</name>
<evidence type="ECO:0000255" key="1">
    <source>
        <dbReference type="HAMAP-Rule" id="MF_00184"/>
    </source>
</evidence>
<evidence type="ECO:0000255" key="2">
    <source>
        <dbReference type="PROSITE-ProRule" id="PRU01228"/>
    </source>
</evidence>
<keyword id="KW-0030">Aminoacyl-tRNA synthetase</keyword>
<keyword id="KW-0067">ATP-binding</keyword>
<keyword id="KW-0963">Cytoplasm</keyword>
<keyword id="KW-0436">Ligase</keyword>
<keyword id="KW-0479">Metal-binding</keyword>
<keyword id="KW-0547">Nucleotide-binding</keyword>
<keyword id="KW-0648">Protein biosynthesis</keyword>
<keyword id="KW-1185">Reference proteome</keyword>
<keyword id="KW-0694">RNA-binding</keyword>
<keyword id="KW-0820">tRNA-binding</keyword>
<keyword id="KW-0862">Zinc</keyword>
<comment type="function">
    <text evidence="1">Catalyzes the attachment of threonine to tRNA(Thr) in a two-step reaction: L-threonine is first activated by ATP to form Thr-AMP and then transferred to the acceptor end of tRNA(Thr). Also edits incorrectly charged L-seryl-tRNA(Thr).</text>
</comment>
<comment type="catalytic activity">
    <reaction evidence="1">
        <text>tRNA(Thr) + L-threonine + ATP = L-threonyl-tRNA(Thr) + AMP + diphosphate + H(+)</text>
        <dbReference type="Rhea" id="RHEA:24624"/>
        <dbReference type="Rhea" id="RHEA-COMP:9670"/>
        <dbReference type="Rhea" id="RHEA-COMP:9704"/>
        <dbReference type="ChEBI" id="CHEBI:15378"/>
        <dbReference type="ChEBI" id="CHEBI:30616"/>
        <dbReference type="ChEBI" id="CHEBI:33019"/>
        <dbReference type="ChEBI" id="CHEBI:57926"/>
        <dbReference type="ChEBI" id="CHEBI:78442"/>
        <dbReference type="ChEBI" id="CHEBI:78534"/>
        <dbReference type="ChEBI" id="CHEBI:456215"/>
        <dbReference type="EC" id="6.1.1.3"/>
    </reaction>
</comment>
<comment type="cofactor">
    <cofactor evidence="1">
        <name>Zn(2+)</name>
        <dbReference type="ChEBI" id="CHEBI:29105"/>
    </cofactor>
    <text evidence="1">Binds 1 zinc ion per subunit.</text>
</comment>
<comment type="subunit">
    <text evidence="1">Homodimer.</text>
</comment>
<comment type="subcellular location">
    <subcellularLocation>
        <location evidence="1">Cytoplasm</location>
    </subcellularLocation>
</comment>
<comment type="similarity">
    <text evidence="1">Belongs to the class-II aminoacyl-tRNA synthetase family.</text>
</comment>
<organism>
    <name type="scientific">Myxococcus xanthus (strain DK1622)</name>
    <dbReference type="NCBI Taxonomy" id="246197"/>
    <lineage>
        <taxon>Bacteria</taxon>
        <taxon>Pseudomonadati</taxon>
        <taxon>Myxococcota</taxon>
        <taxon>Myxococcia</taxon>
        <taxon>Myxococcales</taxon>
        <taxon>Cystobacterineae</taxon>
        <taxon>Myxococcaceae</taxon>
        <taxon>Myxococcus</taxon>
    </lineage>
</organism>
<accession>Q1D6E3</accession>
<sequence>MSDIITVTLPDGSQKQTARGTTIADFVRESIGPGLAKAALFARVNGQDMDLARKLDEDVKLQIFTPKSPESLELIRHDAAHVVASAVQKLFPGTQVTIGPATEEGFYYDFFREKPFTPEDLEKIEAEANAELKRDMAFVRTEISMDEAVRLFEEKGEKFKVEIVKDIAAKGAKTLTLYTHGDWVDFCLGPHAPSTGKIGIIKILSSSGAYWRGDHRNPMLQRVYGTAFFDKKQLAEYLTRIEESKKRDHRKLGKELDLFHFHPYSPGSAFWTPKGTTLYTTLSNWMRQLTQNDGYVEIKTPLMFNKGLWETSGHWGKYKENMFLVLDSESGEHDFSLKPMNCPSHHLFYGFKKHSYRDLPLRYHTQDVLHRNEAAGSLGGLTRVRQFAQDDAHIYCTEAQITDEVRRFVKLLDHVYKAVGLTYAVKLSTRPEQRLGDDSLWDRAEGGLKAALESLGLEYELAPGDGAFYGPKIDFAVSDSIGRRWQLGTMQLDYLAPERFDLTYVGEDNAEHRPVVLHRAIFGSFERFTAILIEHFAGAFPAWLAPIQAVLVTVADRQNDYARKVRDSLRAKGYRVEFDERGLSMNAKIREAQLQKVPFTLVVGDNEVSGEGVSPRRYGGEDLKTMKVTDFEALLAKEAALP</sequence>
<dbReference type="EC" id="6.1.1.3" evidence="1"/>
<dbReference type="EMBL" id="CP000113">
    <property type="protein sequence ID" value="ABF87988.1"/>
    <property type="molecule type" value="Genomic_DNA"/>
</dbReference>
<dbReference type="RefSeq" id="WP_011553616.1">
    <property type="nucleotide sequence ID" value="NC_008095.1"/>
</dbReference>
<dbReference type="SMR" id="Q1D6E3"/>
<dbReference type="STRING" id="246197.MXAN_3591"/>
<dbReference type="EnsemblBacteria" id="ABF87988">
    <property type="protein sequence ID" value="ABF87988"/>
    <property type="gene ID" value="MXAN_3591"/>
</dbReference>
<dbReference type="GeneID" id="41360937"/>
<dbReference type="KEGG" id="mxa:MXAN_3591"/>
<dbReference type="eggNOG" id="COG0441">
    <property type="taxonomic scope" value="Bacteria"/>
</dbReference>
<dbReference type="HOGENOM" id="CLU_008554_0_1_7"/>
<dbReference type="OrthoDB" id="9802304at2"/>
<dbReference type="Proteomes" id="UP000002402">
    <property type="component" value="Chromosome"/>
</dbReference>
<dbReference type="GO" id="GO:0005737">
    <property type="term" value="C:cytoplasm"/>
    <property type="evidence" value="ECO:0007669"/>
    <property type="project" value="UniProtKB-SubCell"/>
</dbReference>
<dbReference type="GO" id="GO:0005524">
    <property type="term" value="F:ATP binding"/>
    <property type="evidence" value="ECO:0007669"/>
    <property type="project" value="UniProtKB-UniRule"/>
</dbReference>
<dbReference type="GO" id="GO:0046872">
    <property type="term" value="F:metal ion binding"/>
    <property type="evidence" value="ECO:0007669"/>
    <property type="project" value="UniProtKB-KW"/>
</dbReference>
<dbReference type="GO" id="GO:0004829">
    <property type="term" value="F:threonine-tRNA ligase activity"/>
    <property type="evidence" value="ECO:0007669"/>
    <property type="project" value="UniProtKB-UniRule"/>
</dbReference>
<dbReference type="GO" id="GO:0000049">
    <property type="term" value="F:tRNA binding"/>
    <property type="evidence" value="ECO:0007669"/>
    <property type="project" value="UniProtKB-KW"/>
</dbReference>
<dbReference type="GO" id="GO:0006435">
    <property type="term" value="P:threonyl-tRNA aminoacylation"/>
    <property type="evidence" value="ECO:0007669"/>
    <property type="project" value="UniProtKB-UniRule"/>
</dbReference>
<dbReference type="CDD" id="cd01667">
    <property type="entry name" value="TGS_ThrRS"/>
    <property type="match status" value="1"/>
</dbReference>
<dbReference type="CDD" id="cd00860">
    <property type="entry name" value="ThrRS_anticodon"/>
    <property type="match status" value="1"/>
</dbReference>
<dbReference type="CDD" id="cd00771">
    <property type="entry name" value="ThrRS_core"/>
    <property type="match status" value="1"/>
</dbReference>
<dbReference type="FunFam" id="3.30.930.10:FF:000002">
    <property type="entry name" value="Threonine--tRNA ligase"/>
    <property type="match status" value="1"/>
</dbReference>
<dbReference type="FunFam" id="3.40.50.800:FF:000001">
    <property type="entry name" value="Threonine--tRNA ligase"/>
    <property type="match status" value="1"/>
</dbReference>
<dbReference type="FunFam" id="3.30.980.10:FF:000005">
    <property type="entry name" value="Threonyl-tRNA synthetase, mitochondrial"/>
    <property type="match status" value="1"/>
</dbReference>
<dbReference type="Gene3D" id="3.10.20.30">
    <property type="match status" value="1"/>
</dbReference>
<dbReference type="Gene3D" id="3.30.54.20">
    <property type="match status" value="1"/>
</dbReference>
<dbReference type="Gene3D" id="3.40.50.800">
    <property type="entry name" value="Anticodon-binding domain"/>
    <property type="match status" value="1"/>
</dbReference>
<dbReference type="Gene3D" id="3.30.930.10">
    <property type="entry name" value="Bira Bifunctional Protein, Domain 2"/>
    <property type="match status" value="1"/>
</dbReference>
<dbReference type="Gene3D" id="3.30.980.10">
    <property type="entry name" value="Threonyl-trna Synthetase, Chain A, domain 2"/>
    <property type="match status" value="1"/>
</dbReference>
<dbReference type="HAMAP" id="MF_00184">
    <property type="entry name" value="Thr_tRNA_synth"/>
    <property type="match status" value="1"/>
</dbReference>
<dbReference type="InterPro" id="IPR002314">
    <property type="entry name" value="aa-tRNA-synt_IIb"/>
</dbReference>
<dbReference type="InterPro" id="IPR006195">
    <property type="entry name" value="aa-tRNA-synth_II"/>
</dbReference>
<dbReference type="InterPro" id="IPR045864">
    <property type="entry name" value="aa-tRNA-synth_II/BPL/LPL"/>
</dbReference>
<dbReference type="InterPro" id="IPR004154">
    <property type="entry name" value="Anticodon-bd"/>
</dbReference>
<dbReference type="InterPro" id="IPR036621">
    <property type="entry name" value="Anticodon-bd_dom_sf"/>
</dbReference>
<dbReference type="InterPro" id="IPR012675">
    <property type="entry name" value="Beta-grasp_dom_sf"/>
</dbReference>
<dbReference type="InterPro" id="IPR004095">
    <property type="entry name" value="TGS"/>
</dbReference>
<dbReference type="InterPro" id="IPR012676">
    <property type="entry name" value="TGS-like"/>
</dbReference>
<dbReference type="InterPro" id="IPR002320">
    <property type="entry name" value="Thr-tRNA-ligase_IIa"/>
</dbReference>
<dbReference type="InterPro" id="IPR018163">
    <property type="entry name" value="Thr/Ala-tRNA-synth_IIc_edit"/>
</dbReference>
<dbReference type="InterPro" id="IPR047246">
    <property type="entry name" value="ThrRS_anticodon"/>
</dbReference>
<dbReference type="InterPro" id="IPR033728">
    <property type="entry name" value="ThrRS_core"/>
</dbReference>
<dbReference type="InterPro" id="IPR012947">
    <property type="entry name" value="tRNA_SAD"/>
</dbReference>
<dbReference type="NCBIfam" id="TIGR00418">
    <property type="entry name" value="thrS"/>
    <property type="match status" value="1"/>
</dbReference>
<dbReference type="PANTHER" id="PTHR11451:SF44">
    <property type="entry name" value="THREONINE--TRNA LIGASE, CHLOROPLASTIC_MITOCHONDRIAL 2"/>
    <property type="match status" value="1"/>
</dbReference>
<dbReference type="PANTHER" id="PTHR11451">
    <property type="entry name" value="THREONINE-TRNA LIGASE"/>
    <property type="match status" value="1"/>
</dbReference>
<dbReference type="Pfam" id="PF03129">
    <property type="entry name" value="HGTP_anticodon"/>
    <property type="match status" value="1"/>
</dbReference>
<dbReference type="Pfam" id="PF02824">
    <property type="entry name" value="TGS"/>
    <property type="match status" value="1"/>
</dbReference>
<dbReference type="Pfam" id="PF00587">
    <property type="entry name" value="tRNA-synt_2b"/>
    <property type="match status" value="1"/>
</dbReference>
<dbReference type="Pfam" id="PF07973">
    <property type="entry name" value="tRNA_SAD"/>
    <property type="match status" value="1"/>
</dbReference>
<dbReference type="PRINTS" id="PR01047">
    <property type="entry name" value="TRNASYNTHTHR"/>
</dbReference>
<dbReference type="SMART" id="SM00863">
    <property type="entry name" value="tRNA_SAD"/>
    <property type="match status" value="1"/>
</dbReference>
<dbReference type="SUPFAM" id="SSF52954">
    <property type="entry name" value="Class II aaRS ABD-related"/>
    <property type="match status" value="1"/>
</dbReference>
<dbReference type="SUPFAM" id="SSF55681">
    <property type="entry name" value="Class II aaRS and biotin synthetases"/>
    <property type="match status" value="1"/>
</dbReference>
<dbReference type="SUPFAM" id="SSF81271">
    <property type="entry name" value="TGS-like"/>
    <property type="match status" value="1"/>
</dbReference>
<dbReference type="SUPFAM" id="SSF55186">
    <property type="entry name" value="ThrRS/AlaRS common domain"/>
    <property type="match status" value="1"/>
</dbReference>
<dbReference type="PROSITE" id="PS50862">
    <property type="entry name" value="AA_TRNA_LIGASE_II"/>
    <property type="match status" value="1"/>
</dbReference>
<dbReference type="PROSITE" id="PS51880">
    <property type="entry name" value="TGS"/>
    <property type="match status" value="1"/>
</dbReference>
<reference key="1">
    <citation type="journal article" date="2006" name="Proc. Natl. Acad. Sci. U.S.A.">
        <title>Evolution of sensory complexity recorded in a myxobacterial genome.</title>
        <authorList>
            <person name="Goldman B.S."/>
            <person name="Nierman W.C."/>
            <person name="Kaiser D."/>
            <person name="Slater S.C."/>
            <person name="Durkin A.S."/>
            <person name="Eisen J.A."/>
            <person name="Ronning C.M."/>
            <person name="Barbazuk W.B."/>
            <person name="Blanchard M."/>
            <person name="Field C."/>
            <person name="Halling C."/>
            <person name="Hinkle G."/>
            <person name="Iartchuk O."/>
            <person name="Kim H.S."/>
            <person name="Mackenzie C."/>
            <person name="Madupu R."/>
            <person name="Miller N."/>
            <person name="Shvartsbeyn A."/>
            <person name="Sullivan S.A."/>
            <person name="Vaudin M."/>
            <person name="Wiegand R."/>
            <person name="Kaplan H.B."/>
        </authorList>
    </citation>
    <scope>NUCLEOTIDE SEQUENCE [LARGE SCALE GENOMIC DNA]</scope>
    <source>
        <strain>DK1622</strain>
    </source>
</reference>
<proteinExistence type="inferred from homology"/>
<gene>
    <name evidence="1" type="primary">thrS</name>
    <name type="ordered locus">MXAN_3591</name>
</gene>
<protein>
    <recommendedName>
        <fullName evidence="1">Threonine--tRNA ligase</fullName>
        <ecNumber evidence="1">6.1.1.3</ecNumber>
    </recommendedName>
    <alternativeName>
        <fullName evidence="1">Threonyl-tRNA synthetase</fullName>
        <shortName evidence="1">ThrRS</shortName>
    </alternativeName>
</protein>